<gene>
    <name evidence="1" type="primary">purA</name>
    <name type="ordered locus">FTM_1639</name>
</gene>
<evidence type="ECO:0000255" key="1">
    <source>
        <dbReference type="HAMAP-Rule" id="MF_00011"/>
    </source>
</evidence>
<feature type="chain" id="PRO_1000089296" description="Adenylosuccinate synthetase">
    <location>
        <begin position="1"/>
        <end position="428"/>
    </location>
</feature>
<feature type="active site" description="Proton acceptor" evidence="1">
    <location>
        <position position="13"/>
    </location>
</feature>
<feature type="active site" description="Proton donor" evidence="1">
    <location>
        <position position="41"/>
    </location>
</feature>
<feature type="binding site" evidence="1">
    <location>
        <begin position="12"/>
        <end position="18"/>
    </location>
    <ligand>
        <name>GTP</name>
        <dbReference type="ChEBI" id="CHEBI:37565"/>
    </ligand>
</feature>
<feature type="binding site" description="in other chain" evidence="1">
    <location>
        <begin position="13"/>
        <end position="16"/>
    </location>
    <ligand>
        <name>IMP</name>
        <dbReference type="ChEBI" id="CHEBI:58053"/>
        <note>ligand shared between dimeric partners</note>
    </ligand>
</feature>
<feature type="binding site" evidence="1">
    <location>
        <position position="13"/>
    </location>
    <ligand>
        <name>Mg(2+)</name>
        <dbReference type="ChEBI" id="CHEBI:18420"/>
    </ligand>
</feature>
<feature type="binding site" description="in other chain" evidence="1">
    <location>
        <begin position="38"/>
        <end position="41"/>
    </location>
    <ligand>
        <name>IMP</name>
        <dbReference type="ChEBI" id="CHEBI:58053"/>
        <note>ligand shared between dimeric partners</note>
    </ligand>
</feature>
<feature type="binding site" evidence="1">
    <location>
        <begin position="40"/>
        <end position="42"/>
    </location>
    <ligand>
        <name>GTP</name>
        <dbReference type="ChEBI" id="CHEBI:37565"/>
    </ligand>
</feature>
<feature type="binding site" evidence="1">
    <location>
        <position position="40"/>
    </location>
    <ligand>
        <name>Mg(2+)</name>
        <dbReference type="ChEBI" id="CHEBI:18420"/>
    </ligand>
</feature>
<feature type="binding site" description="in other chain" evidence="1">
    <location>
        <position position="129"/>
    </location>
    <ligand>
        <name>IMP</name>
        <dbReference type="ChEBI" id="CHEBI:58053"/>
        <note>ligand shared between dimeric partners</note>
    </ligand>
</feature>
<feature type="binding site" evidence="1">
    <location>
        <position position="143"/>
    </location>
    <ligand>
        <name>IMP</name>
        <dbReference type="ChEBI" id="CHEBI:58053"/>
        <note>ligand shared between dimeric partners</note>
    </ligand>
</feature>
<feature type="binding site" description="in other chain" evidence="1">
    <location>
        <position position="224"/>
    </location>
    <ligand>
        <name>IMP</name>
        <dbReference type="ChEBI" id="CHEBI:58053"/>
        <note>ligand shared between dimeric partners</note>
    </ligand>
</feature>
<feature type="binding site" description="in other chain" evidence="1">
    <location>
        <position position="239"/>
    </location>
    <ligand>
        <name>IMP</name>
        <dbReference type="ChEBI" id="CHEBI:58053"/>
        <note>ligand shared between dimeric partners</note>
    </ligand>
</feature>
<feature type="binding site" evidence="1">
    <location>
        <begin position="299"/>
        <end position="305"/>
    </location>
    <ligand>
        <name>substrate</name>
    </ligand>
</feature>
<feature type="binding site" description="in other chain" evidence="1">
    <location>
        <position position="303"/>
    </location>
    <ligand>
        <name>IMP</name>
        <dbReference type="ChEBI" id="CHEBI:58053"/>
        <note>ligand shared between dimeric partners</note>
    </ligand>
</feature>
<feature type="binding site" evidence="1">
    <location>
        <position position="305"/>
    </location>
    <ligand>
        <name>GTP</name>
        <dbReference type="ChEBI" id="CHEBI:37565"/>
    </ligand>
</feature>
<feature type="binding site" evidence="1">
    <location>
        <begin position="331"/>
        <end position="333"/>
    </location>
    <ligand>
        <name>GTP</name>
        <dbReference type="ChEBI" id="CHEBI:37565"/>
    </ligand>
</feature>
<feature type="binding site" evidence="1">
    <location>
        <begin position="410"/>
        <end position="412"/>
    </location>
    <ligand>
        <name>GTP</name>
        <dbReference type="ChEBI" id="CHEBI:37565"/>
    </ligand>
</feature>
<name>PURA_FRATM</name>
<comment type="function">
    <text evidence="1">Plays an important role in the de novo pathway of purine nucleotide biosynthesis. Catalyzes the first committed step in the biosynthesis of AMP from IMP.</text>
</comment>
<comment type="catalytic activity">
    <reaction evidence="1">
        <text>IMP + L-aspartate + GTP = N(6)-(1,2-dicarboxyethyl)-AMP + GDP + phosphate + 2 H(+)</text>
        <dbReference type="Rhea" id="RHEA:15753"/>
        <dbReference type="ChEBI" id="CHEBI:15378"/>
        <dbReference type="ChEBI" id="CHEBI:29991"/>
        <dbReference type="ChEBI" id="CHEBI:37565"/>
        <dbReference type="ChEBI" id="CHEBI:43474"/>
        <dbReference type="ChEBI" id="CHEBI:57567"/>
        <dbReference type="ChEBI" id="CHEBI:58053"/>
        <dbReference type="ChEBI" id="CHEBI:58189"/>
        <dbReference type="EC" id="6.3.4.4"/>
    </reaction>
</comment>
<comment type="cofactor">
    <cofactor evidence="1">
        <name>Mg(2+)</name>
        <dbReference type="ChEBI" id="CHEBI:18420"/>
    </cofactor>
    <text evidence="1">Binds 1 Mg(2+) ion per subunit.</text>
</comment>
<comment type="pathway">
    <text evidence="1">Purine metabolism; AMP biosynthesis via de novo pathway; AMP from IMP: step 1/2.</text>
</comment>
<comment type="subunit">
    <text evidence="1">Homodimer.</text>
</comment>
<comment type="subcellular location">
    <subcellularLocation>
        <location evidence="1">Cytoplasm</location>
    </subcellularLocation>
</comment>
<comment type="similarity">
    <text evidence="1">Belongs to the adenylosuccinate synthetase family.</text>
</comment>
<organism>
    <name type="scientific">Francisella tularensis subsp. mediasiatica (strain FSC147)</name>
    <dbReference type="NCBI Taxonomy" id="441952"/>
    <lineage>
        <taxon>Bacteria</taxon>
        <taxon>Pseudomonadati</taxon>
        <taxon>Pseudomonadota</taxon>
        <taxon>Gammaproteobacteria</taxon>
        <taxon>Thiotrichales</taxon>
        <taxon>Francisellaceae</taxon>
        <taxon>Francisella</taxon>
    </lineage>
</organism>
<sequence length="428" mass="46915">MSNIVIVGAQWGDEGKGKIADTLAEKADLVVRYQGGNNAGHTLVVNGKKTFLHLIPSGVLHQHTKCVIGHGVVLDPVALDEEITRLQAKGIAISAENLFVSESCTIITSYHKLLDAVRESNTSEKIGTTGKGIGPAYEDKVSRKGIKFKHLFDKDLLRSRLAISLAEKETLFRDLYKVEYPTLEQEFDKLFALGQKLKQYAADTFSIIDKAIAAGKNVVYEGAQGVLLDVDYGTYPFVTSSNTSVAGVYSGATTAGHGFDHVIGITKAYTTRVGEGPFPTELFDDVGKFIQHKGGEIGVTTGRIRRCGWLDLPLLKYSAKCSNLTSIALTKVDVLSDMDTLKVCIGYKYEGKEIYCAYPGIDLYKVEPILVEMEPFSIDETVTKDNMPAALKTYLETIENHVGIPISSLAYGPSREQILFFEDYFKKG</sequence>
<accession>B2SE78</accession>
<keyword id="KW-0963">Cytoplasm</keyword>
<keyword id="KW-0342">GTP-binding</keyword>
<keyword id="KW-0436">Ligase</keyword>
<keyword id="KW-0460">Magnesium</keyword>
<keyword id="KW-0479">Metal-binding</keyword>
<keyword id="KW-0547">Nucleotide-binding</keyword>
<keyword id="KW-0658">Purine biosynthesis</keyword>
<proteinExistence type="inferred from homology"/>
<dbReference type="EC" id="6.3.4.4" evidence="1"/>
<dbReference type="EMBL" id="CP000915">
    <property type="protein sequence ID" value="ACD31442.1"/>
    <property type="molecule type" value="Genomic_DNA"/>
</dbReference>
<dbReference type="SMR" id="B2SE78"/>
<dbReference type="KEGG" id="ftm:FTM_1639"/>
<dbReference type="HOGENOM" id="CLU_029848_0_0_6"/>
<dbReference type="UniPathway" id="UPA00075">
    <property type="reaction ID" value="UER00335"/>
</dbReference>
<dbReference type="GO" id="GO:0005737">
    <property type="term" value="C:cytoplasm"/>
    <property type="evidence" value="ECO:0007669"/>
    <property type="project" value="UniProtKB-SubCell"/>
</dbReference>
<dbReference type="GO" id="GO:0004019">
    <property type="term" value="F:adenylosuccinate synthase activity"/>
    <property type="evidence" value="ECO:0007669"/>
    <property type="project" value="UniProtKB-UniRule"/>
</dbReference>
<dbReference type="GO" id="GO:0005525">
    <property type="term" value="F:GTP binding"/>
    <property type="evidence" value="ECO:0007669"/>
    <property type="project" value="UniProtKB-UniRule"/>
</dbReference>
<dbReference type="GO" id="GO:0000287">
    <property type="term" value="F:magnesium ion binding"/>
    <property type="evidence" value="ECO:0007669"/>
    <property type="project" value="UniProtKB-UniRule"/>
</dbReference>
<dbReference type="GO" id="GO:0044208">
    <property type="term" value="P:'de novo' AMP biosynthetic process"/>
    <property type="evidence" value="ECO:0007669"/>
    <property type="project" value="UniProtKB-UniRule"/>
</dbReference>
<dbReference type="GO" id="GO:0046040">
    <property type="term" value="P:IMP metabolic process"/>
    <property type="evidence" value="ECO:0007669"/>
    <property type="project" value="TreeGrafter"/>
</dbReference>
<dbReference type="CDD" id="cd03108">
    <property type="entry name" value="AdSS"/>
    <property type="match status" value="1"/>
</dbReference>
<dbReference type="FunFam" id="1.10.300.10:FF:000001">
    <property type="entry name" value="Adenylosuccinate synthetase"/>
    <property type="match status" value="1"/>
</dbReference>
<dbReference type="FunFam" id="3.90.170.10:FF:000001">
    <property type="entry name" value="Adenylosuccinate synthetase"/>
    <property type="match status" value="1"/>
</dbReference>
<dbReference type="Gene3D" id="3.40.440.10">
    <property type="entry name" value="Adenylosuccinate Synthetase, subunit A, domain 1"/>
    <property type="match status" value="1"/>
</dbReference>
<dbReference type="Gene3D" id="1.10.300.10">
    <property type="entry name" value="Adenylosuccinate Synthetase, subunit A, domain 2"/>
    <property type="match status" value="1"/>
</dbReference>
<dbReference type="Gene3D" id="3.90.170.10">
    <property type="entry name" value="Adenylosuccinate Synthetase, subunit A, domain 3"/>
    <property type="match status" value="1"/>
</dbReference>
<dbReference type="HAMAP" id="MF_00011">
    <property type="entry name" value="Adenylosucc_synth"/>
    <property type="match status" value="1"/>
</dbReference>
<dbReference type="InterPro" id="IPR018220">
    <property type="entry name" value="Adenylosuccin_syn_GTP-bd"/>
</dbReference>
<dbReference type="InterPro" id="IPR033128">
    <property type="entry name" value="Adenylosuccin_syn_Lys_AS"/>
</dbReference>
<dbReference type="InterPro" id="IPR042109">
    <property type="entry name" value="Adenylosuccinate_synth_dom1"/>
</dbReference>
<dbReference type="InterPro" id="IPR042110">
    <property type="entry name" value="Adenylosuccinate_synth_dom2"/>
</dbReference>
<dbReference type="InterPro" id="IPR042111">
    <property type="entry name" value="Adenylosuccinate_synth_dom3"/>
</dbReference>
<dbReference type="InterPro" id="IPR001114">
    <property type="entry name" value="Adenylosuccinate_synthetase"/>
</dbReference>
<dbReference type="InterPro" id="IPR027417">
    <property type="entry name" value="P-loop_NTPase"/>
</dbReference>
<dbReference type="NCBIfam" id="NF002223">
    <property type="entry name" value="PRK01117.1"/>
    <property type="match status" value="1"/>
</dbReference>
<dbReference type="NCBIfam" id="TIGR00184">
    <property type="entry name" value="purA"/>
    <property type="match status" value="1"/>
</dbReference>
<dbReference type="PANTHER" id="PTHR11846">
    <property type="entry name" value="ADENYLOSUCCINATE SYNTHETASE"/>
    <property type="match status" value="1"/>
</dbReference>
<dbReference type="PANTHER" id="PTHR11846:SF0">
    <property type="entry name" value="ADENYLOSUCCINATE SYNTHETASE"/>
    <property type="match status" value="1"/>
</dbReference>
<dbReference type="Pfam" id="PF00709">
    <property type="entry name" value="Adenylsucc_synt"/>
    <property type="match status" value="1"/>
</dbReference>
<dbReference type="SMART" id="SM00788">
    <property type="entry name" value="Adenylsucc_synt"/>
    <property type="match status" value="1"/>
</dbReference>
<dbReference type="SUPFAM" id="SSF52540">
    <property type="entry name" value="P-loop containing nucleoside triphosphate hydrolases"/>
    <property type="match status" value="1"/>
</dbReference>
<dbReference type="PROSITE" id="PS01266">
    <property type="entry name" value="ADENYLOSUCCIN_SYN_1"/>
    <property type="match status" value="1"/>
</dbReference>
<dbReference type="PROSITE" id="PS00513">
    <property type="entry name" value="ADENYLOSUCCIN_SYN_2"/>
    <property type="match status" value="1"/>
</dbReference>
<protein>
    <recommendedName>
        <fullName evidence="1">Adenylosuccinate synthetase</fullName>
        <shortName evidence="1">AMPSase</shortName>
        <shortName evidence="1">AdSS</shortName>
        <ecNumber evidence="1">6.3.4.4</ecNumber>
    </recommendedName>
    <alternativeName>
        <fullName evidence="1">IMP--aspartate ligase</fullName>
    </alternativeName>
</protein>
<reference key="1">
    <citation type="journal article" date="2009" name="PLoS Pathog.">
        <title>Molecular evolutionary consequences of niche restriction in Francisella tularensis, a facultative intracellular pathogen.</title>
        <authorList>
            <person name="Larsson P."/>
            <person name="Elfsmark D."/>
            <person name="Svensson K."/>
            <person name="Wikstroem P."/>
            <person name="Forsman M."/>
            <person name="Brettin T."/>
            <person name="Keim P."/>
            <person name="Johansson A."/>
        </authorList>
    </citation>
    <scope>NUCLEOTIDE SEQUENCE [LARGE SCALE GENOMIC DNA]</scope>
    <source>
        <strain>FSC147</strain>
    </source>
</reference>